<organism>
    <name type="scientific">Arabidopsis thaliana</name>
    <name type="common">Mouse-ear cress</name>
    <dbReference type="NCBI Taxonomy" id="3702"/>
    <lineage>
        <taxon>Eukaryota</taxon>
        <taxon>Viridiplantae</taxon>
        <taxon>Streptophyta</taxon>
        <taxon>Embryophyta</taxon>
        <taxon>Tracheophyta</taxon>
        <taxon>Spermatophyta</taxon>
        <taxon>Magnoliopsida</taxon>
        <taxon>eudicotyledons</taxon>
        <taxon>Gunneridae</taxon>
        <taxon>Pentapetalae</taxon>
        <taxon>rosids</taxon>
        <taxon>malvids</taxon>
        <taxon>Brassicales</taxon>
        <taxon>Brassicaceae</taxon>
        <taxon>Camelineae</taxon>
        <taxon>Arabidopsis</taxon>
    </lineage>
</organism>
<accession>Q4PT34</accession>
<accession>Q9LPZ8</accession>
<evidence type="ECO:0000250" key="1"/>
<evidence type="ECO:0000255" key="2"/>
<evidence type="ECO:0000255" key="3">
    <source>
        <dbReference type="PROSITE-ProRule" id="PRU10040"/>
    </source>
</evidence>
<evidence type="ECO:0000305" key="4"/>
<feature type="signal peptide" evidence="2">
    <location>
        <begin position="1"/>
        <end position="27"/>
    </location>
</feature>
<feature type="chain" id="PRO_0000371704" description="Probable pectinesterase 56">
    <location>
        <begin position="28"/>
        <end position="288"/>
    </location>
</feature>
<feature type="active site" description="Proton donor" evidence="3">
    <location>
        <position position="173"/>
    </location>
</feature>
<feature type="active site" description="Nucleophile" evidence="3">
    <location>
        <position position="194"/>
    </location>
</feature>
<feature type="binding site" evidence="1">
    <location>
        <position position="120"/>
    </location>
    <ligand>
        <name>substrate</name>
    </ligand>
</feature>
<feature type="binding site" evidence="1">
    <location>
        <position position="150"/>
    </location>
    <ligand>
        <name>substrate</name>
    </ligand>
</feature>
<feature type="binding site" evidence="1">
    <location>
        <position position="262"/>
    </location>
    <ligand>
        <name>substrate</name>
    </ligand>
</feature>
<feature type="binding site" evidence="1">
    <location>
        <position position="264"/>
    </location>
    <ligand>
        <name>substrate</name>
    </ligand>
</feature>
<feature type="site" description="Transition state stabilizer" evidence="1">
    <location>
        <position position="172"/>
    </location>
</feature>
<feature type="glycosylation site" description="N-linked (GlcNAc...) asparagine" evidence="2">
    <location>
        <position position="55"/>
    </location>
</feature>
<feature type="glycosylation site" description="N-linked (GlcNAc...) asparagine" evidence="2">
    <location>
        <position position="95"/>
    </location>
</feature>
<feature type="glycosylation site" description="N-linked (GlcNAc...) asparagine" evidence="2">
    <location>
        <position position="242"/>
    </location>
</feature>
<reference key="1">
    <citation type="journal article" date="2000" name="Nature">
        <title>Sequence and analysis of chromosome 1 of the plant Arabidopsis thaliana.</title>
        <authorList>
            <person name="Theologis A."/>
            <person name="Ecker J.R."/>
            <person name="Palm C.J."/>
            <person name="Federspiel N.A."/>
            <person name="Kaul S."/>
            <person name="White O."/>
            <person name="Alonso J."/>
            <person name="Altafi H."/>
            <person name="Araujo R."/>
            <person name="Bowman C.L."/>
            <person name="Brooks S.Y."/>
            <person name="Buehler E."/>
            <person name="Chan A."/>
            <person name="Chao Q."/>
            <person name="Chen H."/>
            <person name="Cheuk R.F."/>
            <person name="Chin C.W."/>
            <person name="Chung M.K."/>
            <person name="Conn L."/>
            <person name="Conway A.B."/>
            <person name="Conway A.R."/>
            <person name="Creasy T.H."/>
            <person name="Dewar K."/>
            <person name="Dunn P."/>
            <person name="Etgu P."/>
            <person name="Feldblyum T.V."/>
            <person name="Feng J.-D."/>
            <person name="Fong B."/>
            <person name="Fujii C.Y."/>
            <person name="Gill J.E."/>
            <person name="Goldsmith A.D."/>
            <person name="Haas B."/>
            <person name="Hansen N.F."/>
            <person name="Hughes B."/>
            <person name="Huizar L."/>
            <person name="Hunter J.L."/>
            <person name="Jenkins J."/>
            <person name="Johnson-Hopson C."/>
            <person name="Khan S."/>
            <person name="Khaykin E."/>
            <person name="Kim C.J."/>
            <person name="Koo H.L."/>
            <person name="Kremenetskaia I."/>
            <person name="Kurtz D.B."/>
            <person name="Kwan A."/>
            <person name="Lam B."/>
            <person name="Langin-Hooper S."/>
            <person name="Lee A."/>
            <person name="Lee J.M."/>
            <person name="Lenz C.A."/>
            <person name="Li J.H."/>
            <person name="Li Y.-P."/>
            <person name="Lin X."/>
            <person name="Liu S.X."/>
            <person name="Liu Z.A."/>
            <person name="Luros J.S."/>
            <person name="Maiti R."/>
            <person name="Marziali A."/>
            <person name="Militscher J."/>
            <person name="Miranda M."/>
            <person name="Nguyen M."/>
            <person name="Nierman W.C."/>
            <person name="Osborne B.I."/>
            <person name="Pai G."/>
            <person name="Peterson J."/>
            <person name="Pham P.K."/>
            <person name="Rizzo M."/>
            <person name="Rooney T."/>
            <person name="Rowley D."/>
            <person name="Sakano H."/>
            <person name="Salzberg S.L."/>
            <person name="Schwartz J.R."/>
            <person name="Shinn P."/>
            <person name="Southwick A.M."/>
            <person name="Sun H."/>
            <person name="Tallon L.J."/>
            <person name="Tambunga G."/>
            <person name="Toriumi M.J."/>
            <person name="Town C.D."/>
            <person name="Utterback T."/>
            <person name="Van Aken S."/>
            <person name="Vaysberg M."/>
            <person name="Vysotskaia V.S."/>
            <person name="Walker M."/>
            <person name="Wu D."/>
            <person name="Yu G."/>
            <person name="Fraser C.M."/>
            <person name="Venter J.C."/>
            <person name="Davis R.W."/>
        </authorList>
    </citation>
    <scope>NUCLEOTIDE SEQUENCE [LARGE SCALE GENOMIC DNA]</scope>
    <source>
        <strain>cv. Columbia</strain>
    </source>
</reference>
<reference key="2">
    <citation type="journal article" date="2017" name="Plant J.">
        <title>Araport11: a complete reannotation of the Arabidopsis thaliana reference genome.</title>
        <authorList>
            <person name="Cheng C.Y."/>
            <person name="Krishnakumar V."/>
            <person name="Chan A.P."/>
            <person name="Thibaud-Nissen F."/>
            <person name="Schobel S."/>
            <person name="Town C.D."/>
        </authorList>
    </citation>
    <scope>GENOME REANNOTATION</scope>
    <source>
        <strain>cv. Columbia</strain>
    </source>
</reference>
<reference key="3">
    <citation type="submission" date="2005-05" db="EMBL/GenBank/DDBJ databases">
        <authorList>
            <person name="Underwood B.A."/>
            <person name="Xiao Y.-L."/>
            <person name="Moskal W.A. Jr."/>
            <person name="Monaghan E.L."/>
            <person name="Wang W."/>
            <person name="Redman J.C."/>
            <person name="Wu H.C."/>
            <person name="Utterback T."/>
            <person name="Town C.D."/>
        </authorList>
    </citation>
    <scope>NUCLEOTIDE SEQUENCE [LARGE SCALE MRNA]</scope>
    <source>
        <strain>cv. Columbia</strain>
    </source>
</reference>
<reference key="4">
    <citation type="journal article" date="2004" name="Carbohydr. Res.">
        <title>Pectin methylesterases: sequence-structural features and phylogenetic relationships.</title>
        <authorList>
            <person name="Markovic O."/>
            <person name="Janecek S."/>
        </authorList>
    </citation>
    <scope>GENE FAMILY</scope>
    <scope>NOMENCLATURE</scope>
</reference>
<proteinExistence type="evidence at transcript level"/>
<protein>
    <recommendedName>
        <fullName>Probable pectinesterase 56</fullName>
        <shortName>PE 56</shortName>
        <ecNumber>3.1.1.11</ecNumber>
    </recommendedName>
    <alternativeName>
        <fullName>Pectin methylesterase 56</fullName>
        <shortName>AtPME56</shortName>
    </alternativeName>
</protein>
<comment type="function">
    <text evidence="1">Acts in the modification of cell walls via demethylesterification of cell wall pectin.</text>
</comment>
<comment type="catalytic activity">
    <reaction>
        <text>[(1-&gt;4)-alpha-D-galacturonosyl methyl ester](n) + n H2O = [(1-&gt;4)-alpha-D-galacturonosyl](n) + n methanol + n H(+)</text>
        <dbReference type="Rhea" id="RHEA:22380"/>
        <dbReference type="Rhea" id="RHEA-COMP:14570"/>
        <dbReference type="Rhea" id="RHEA-COMP:14573"/>
        <dbReference type="ChEBI" id="CHEBI:15377"/>
        <dbReference type="ChEBI" id="CHEBI:15378"/>
        <dbReference type="ChEBI" id="CHEBI:17790"/>
        <dbReference type="ChEBI" id="CHEBI:140522"/>
        <dbReference type="ChEBI" id="CHEBI:140523"/>
        <dbReference type="EC" id="3.1.1.11"/>
    </reaction>
</comment>
<comment type="pathway">
    <text>Glycan metabolism; pectin degradation; 2-dehydro-3-deoxy-D-gluconate from pectin: step 1/5.</text>
</comment>
<comment type="subcellular location">
    <subcellularLocation>
        <location evidence="1">Secreted</location>
        <location evidence="1">Cell wall</location>
    </subcellularLocation>
</comment>
<comment type="similarity">
    <text evidence="4">Belongs to the pectinesterase family.</text>
</comment>
<comment type="sequence caution" evidence="4">
    <conflict type="erroneous gene model prediction">
        <sequence resource="EMBL-CDS" id="AAF16649"/>
    </conflict>
</comment>
<keyword id="KW-0063">Aspartyl esterase</keyword>
<keyword id="KW-0134">Cell wall</keyword>
<keyword id="KW-0961">Cell wall biogenesis/degradation</keyword>
<keyword id="KW-0325">Glycoprotein</keyword>
<keyword id="KW-0378">Hydrolase</keyword>
<keyword id="KW-1185">Reference proteome</keyword>
<keyword id="KW-0964">Secreted</keyword>
<keyword id="KW-0732">Signal</keyword>
<sequence>MAMTSTMQLLVLSFLVIASLFLGATVAPPASLISTPDQALKDKADLIVAKDGSGNFTTVNEAVAAAPENGVKPFVIYIKEGLYKEVIRIGKKKTNLTLVGDGRDLTVLSGDLNGVDGIKTFDSATLAVDESGFMAQDLCIRNTAGPEKRQAVALRISTDMTIIYRCRIDAYQDTLYAYSGRQFYRDCYITGTVDFIFGRAAAVFQYCQIEARKPGIGQTNILTAQSREEDTATSGFSFQKCNISASSDLTPIKGTVKTFLGRPWRAFSRVVFMESFIDDVIDRAGWTP</sequence>
<name>PME56_ARATH</name>
<gene>
    <name type="primary">PME56</name>
    <name type="synonym">ARATH56</name>
    <name type="ordered locus">At1g11370</name>
    <name type="ORF">T23J18.3</name>
</gene>
<dbReference type="EC" id="3.1.1.11"/>
<dbReference type="EMBL" id="AC011661">
    <property type="protein sequence ID" value="AAF16649.1"/>
    <property type="status" value="ALT_SEQ"/>
    <property type="molecule type" value="Genomic_DNA"/>
</dbReference>
<dbReference type="EMBL" id="CP002684">
    <property type="protein sequence ID" value="AEE28727.1"/>
    <property type="molecule type" value="Genomic_DNA"/>
</dbReference>
<dbReference type="EMBL" id="DQ056452">
    <property type="protein sequence ID" value="AAY78609.1"/>
    <property type="molecule type" value="mRNA"/>
</dbReference>
<dbReference type="PIR" id="F86247">
    <property type="entry name" value="F86247"/>
</dbReference>
<dbReference type="RefSeq" id="NP_172604.1">
    <property type="nucleotide sequence ID" value="NM_101010.2"/>
</dbReference>
<dbReference type="SMR" id="Q4PT34"/>
<dbReference type="FunCoup" id="Q4PT34">
    <property type="interactions" value="1"/>
</dbReference>
<dbReference type="STRING" id="3702.Q4PT34"/>
<dbReference type="GlyCosmos" id="Q4PT34">
    <property type="glycosylation" value="3 sites, No reported glycans"/>
</dbReference>
<dbReference type="GlyGen" id="Q4PT34">
    <property type="glycosylation" value="3 sites"/>
</dbReference>
<dbReference type="PaxDb" id="3702-AT1G11370.1"/>
<dbReference type="EnsemblPlants" id="AT1G11370.1">
    <property type="protein sequence ID" value="AT1G11370.1"/>
    <property type="gene ID" value="AT1G11370"/>
</dbReference>
<dbReference type="GeneID" id="837679"/>
<dbReference type="Gramene" id="AT1G11370.1">
    <property type="protein sequence ID" value="AT1G11370.1"/>
    <property type="gene ID" value="AT1G11370"/>
</dbReference>
<dbReference type="KEGG" id="ath:AT1G11370"/>
<dbReference type="Araport" id="AT1G11370"/>
<dbReference type="TAIR" id="AT1G11370"/>
<dbReference type="eggNOG" id="ENOG502QUQ5">
    <property type="taxonomic scope" value="Eukaryota"/>
</dbReference>
<dbReference type="HOGENOM" id="CLU_012243_4_0_1"/>
<dbReference type="InParanoid" id="Q4PT34"/>
<dbReference type="OMA" id="TQGRINW"/>
<dbReference type="PhylomeDB" id="Q4PT34"/>
<dbReference type="BioCyc" id="ARA:AT1G11370-MONOMER"/>
<dbReference type="UniPathway" id="UPA00545">
    <property type="reaction ID" value="UER00823"/>
</dbReference>
<dbReference type="PRO" id="PR:Q4PT34"/>
<dbReference type="Proteomes" id="UP000006548">
    <property type="component" value="Chromosome 1"/>
</dbReference>
<dbReference type="ExpressionAtlas" id="Q4PT34">
    <property type="expression patterns" value="baseline and differential"/>
</dbReference>
<dbReference type="GO" id="GO:0005576">
    <property type="term" value="C:extracellular region"/>
    <property type="evidence" value="ECO:0007669"/>
    <property type="project" value="UniProtKB-KW"/>
</dbReference>
<dbReference type="GO" id="GO:0030599">
    <property type="term" value="F:pectinesterase activity"/>
    <property type="evidence" value="ECO:0007669"/>
    <property type="project" value="UniProtKB-EC"/>
</dbReference>
<dbReference type="GO" id="GO:0042545">
    <property type="term" value="P:cell wall modification"/>
    <property type="evidence" value="ECO:0007669"/>
    <property type="project" value="InterPro"/>
</dbReference>
<dbReference type="GO" id="GO:0045490">
    <property type="term" value="P:pectin catabolic process"/>
    <property type="evidence" value="ECO:0007669"/>
    <property type="project" value="UniProtKB-UniPathway"/>
</dbReference>
<dbReference type="FunFam" id="2.160.20.10:FF:000029">
    <property type="entry name" value="Pectinesterase 4"/>
    <property type="match status" value="1"/>
</dbReference>
<dbReference type="Gene3D" id="2.160.20.10">
    <property type="entry name" value="Single-stranded right-handed beta-helix, Pectin lyase-like"/>
    <property type="match status" value="1"/>
</dbReference>
<dbReference type="InterPro" id="IPR012334">
    <property type="entry name" value="Pectin_lyas_fold"/>
</dbReference>
<dbReference type="InterPro" id="IPR011050">
    <property type="entry name" value="Pectin_lyase_fold/virulence"/>
</dbReference>
<dbReference type="InterPro" id="IPR033131">
    <property type="entry name" value="Pectinesterase_Asp_AS"/>
</dbReference>
<dbReference type="InterPro" id="IPR000070">
    <property type="entry name" value="Pectinesterase_cat"/>
</dbReference>
<dbReference type="PANTHER" id="PTHR31707">
    <property type="entry name" value="PECTINESTERASE"/>
    <property type="match status" value="1"/>
</dbReference>
<dbReference type="Pfam" id="PF01095">
    <property type="entry name" value="Pectinesterase"/>
    <property type="match status" value="1"/>
</dbReference>
<dbReference type="SUPFAM" id="SSF51126">
    <property type="entry name" value="Pectin lyase-like"/>
    <property type="match status" value="1"/>
</dbReference>
<dbReference type="PROSITE" id="PS00503">
    <property type="entry name" value="PECTINESTERASE_2"/>
    <property type="match status" value="1"/>
</dbReference>